<keyword id="KW-0025">Alternative splicing</keyword>
<keyword id="KW-0963">Cytoplasm</keyword>
<keyword id="KW-0206">Cytoskeleton</keyword>
<keyword id="KW-0344">Guanine-nucleotide releasing factor</keyword>
<keyword id="KW-0479">Metal-binding</keyword>
<keyword id="KW-1185">Reference proteome</keyword>
<keyword id="KW-0677">Repeat</keyword>
<keyword id="KW-0862">Zinc</keyword>
<keyword id="KW-0863">Zinc-finger</keyword>
<name>FGDH_CAEEL</name>
<gene>
    <name evidence="10" type="primary">tag-77</name>
    <name evidence="10" type="ORF">C28C12.10</name>
</gene>
<sequence length="1029" mass="118319">MKYDMNHRKNSDDTPPASRTVKEMMAEFQNKLDDGDNRFRKQPPPPPSPRRAPPPPPHRKPASLSPPPDDENTIRPPSSSESSENIPEEPQELITPNTTRRSLGPKPTVAPKPLFLNGLLPSSSTSDVSSQNSPKCDPHPSCTTPTILVSPATSEYSNGVFFGANETNGSGVKDRARQLVNMGFVPRMQNGGTGTPSERPISQVSTLSQVSDEFDEGDTSASDEESMNSEKHLRRHRHEDDFDELPLPKNERKTTTVAATHSEIMNEMEHLFVRGGKKNNGVHKQQRRQSNIDEIPSDVGKLRDNRKGRHNSLFVSPTSGMSSSSTDDFSRITSMTSDRSSILTSHSGGEDSTDGASPVPDYETGDEKDDQRLKKLHYAAVEFLKVQNNYVQYLKEMAVLYPEYMERFGKRVGRDLLASHNGHENVVLQIKKIMVQILPIHEMLLKEIDKVCSNWDSRYPNMSKTIGTFADFLKCCQPFLDNKADFLNKLLQLRNEDKEFDEATYMFETEVFKRGKKGAVIQQLDQVHQNFMRYKLLMLRYSEYLIDDCDEKEKAQEAIQKLENVTQAVNQKMGLPTTEELTKLYYRFQCQFNVLEPGRVLIRQSEVMKQTRKELQPRYLVLFTDYLWICRVSSSGQFDINRSYRIPLEYMKFERMEEDERIRCLQIRSRVKSALIIFSSEKERNQWTDDLTKAQYDRKSYKRRQSTAVQRHDENKKKMNKLLMLTPEVPDASDLERPQLIDSRSRSMSCESQDELSSVPVTPLDNGEIDETLGFGEVTRNGSGKKPPSEMIKPVWLPDNISNECLMEGCSTEFNIINRRHHCRDCGWLICKFCKGQAPLSKYDFTKQNVCSECFDRHYKAYKDGVLFPSKNMIVQSDETILVKIGKRNDKEIVDPRKLFKAPVNYGFRHRNVEEKRAQSIVFGRVYLSFRSRKTETVRHALLRRDDLKLVFYKAELDSKSVLELLIYGYFYRETPLDDGWLFELVHRNQIRTDDTKDDVISFRVDNSASAKKWSAAFADKLELDPTRG</sequence>
<evidence type="ECO:0000250" key="1">
    <source>
        <dbReference type="UniProtKB" id="Q6ZNL6"/>
    </source>
</evidence>
<evidence type="ECO:0000255" key="2">
    <source>
        <dbReference type="PROSITE-ProRule" id="PRU00062"/>
    </source>
</evidence>
<evidence type="ECO:0000255" key="3">
    <source>
        <dbReference type="PROSITE-ProRule" id="PRU00091"/>
    </source>
</evidence>
<evidence type="ECO:0000255" key="4">
    <source>
        <dbReference type="PROSITE-ProRule" id="PRU00145"/>
    </source>
</evidence>
<evidence type="ECO:0000256" key="5">
    <source>
        <dbReference type="SAM" id="MobiDB-lite"/>
    </source>
</evidence>
<evidence type="ECO:0000269" key="6">
    <source>
    </source>
</evidence>
<evidence type="ECO:0000305" key="7"/>
<evidence type="ECO:0000312" key="8">
    <source>
        <dbReference type="Proteomes" id="UP000001940"/>
    </source>
</evidence>
<evidence type="ECO:0000312" key="9">
    <source>
        <dbReference type="WormBase" id="C28C12.10a"/>
    </source>
</evidence>
<evidence type="ECO:0000312" key="10">
    <source>
        <dbReference type="WormBase" id="C28C12.10b"/>
    </source>
</evidence>
<evidence type="ECO:0000312" key="11">
    <source>
        <dbReference type="WormBase" id="C28C12.10c"/>
    </source>
</evidence>
<evidence type="ECO:0000312" key="12">
    <source>
        <dbReference type="WormBase" id="C28C12.10d"/>
    </source>
</evidence>
<evidence type="ECO:0000312" key="13">
    <source>
        <dbReference type="WormBase" id="C28C12.10e"/>
    </source>
</evidence>
<evidence type="ECO:0000312" key="14">
    <source>
        <dbReference type="WormBase" id="C28C12.10f"/>
    </source>
</evidence>
<feature type="chain" id="PRO_0000457213" description="FYVE, RhoGEF and PH domain-containing protein tag-77">
    <location>
        <begin position="1"/>
        <end position="1029"/>
    </location>
</feature>
<feature type="domain" description="DH" evidence="2">
    <location>
        <begin position="375"/>
        <end position="572"/>
    </location>
</feature>
<feature type="domain" description="PH" evidence="4">
    <location>
        <begin position="593"/>
        <end position="696"/>
    </location>
</feature>
<feature type="zinc finger region" description="FYVE-type; degenerate" evidence="3">
    <location>
        <begin position="810"/>
        <end position="859"/>
    </location>
</feature>
<feature type="region of interest" description="Disordered" evidence="5">
    <location>
        <begin position="1"/>
        <end position="155"/>
    </location>
</feature>
<feature type="region of interest" description="Disordered" evidence="5">
    <location>
        <begin position="185"/>
        <end position="254"/>
    </location>
</feature>
<feature type="region of interest" description="Disordered" evidence="5">
    <location>
        <begin position="279"/>
        <end position="370"/>
    </location>
</feature>
<feature type="compositionally biased region" description="Basic and acidic residues" evidence="5">
    <location>
        <begin position="1"/>
        <end position="12"/>
    </location>
</feature>
<feature type="compositionally biased region" description="Basic and acidic residues" evidence="5">
    <location>
        <begin position="20"/>
        <end position="39"/>
    </location>
</feature>
<feature type="compositionally biased region" description="Pro residues" evidence="5">
    <location>
        <begin position="42"/>
        <end position="56"/>
    </location>
</feature>
<feature type="compositionally biased region" description="Low complexity" evidence="5">
    <location>
        <begin position="76"/>
        <end position="85"/>
    </location>
</feature>
<feature type="compositionally biased region" description="Low complexity" evidence="5">
    <location>
        <begin position="122"/>
        <end position="133"/>
    </location>
</feature>
<feature type="compositionally biased region" description="Polar residues" evidence="5">
    <location>
        <begin position="141"/>
        <end position="155"/>
    </location>
</feature>
<feature type="compositionally biased region" description="Polar residues" evidence="5">
    <location>
        <begin position="200"/>
        <end position="211"/>
    </location>
</feature>
<feature type="compositionally biased region" description="Acidic residues" evidence="5">
    <location>
        <begin position="212"/>
        <end position="227"/>
    </location>
</feature>
<feature type="compositionally biased region" description="Low complexity" evidence="5">
    <location>
        <begin position="316"/>
        <end position="334"/>
    </location>
</feature>
<feature type="compositionally biased region" description="Polar residues" evidence="5">
    <location>
        <begin position="335"/>
        <end position="347"/>
    </location>
</feature>
<feature type="binding site" evidence="3">
    <location>
        <position position="810"/>
    </location>
    <ligand>
        <name>Zn(2+)</name>
        <dbReference type="ChEBI" id="CHEBI:29105"/>
        <label>1</label>
    </ligand>
</feature>
<feature type="binding site" evidence="3">
    <location>
        <position position="823"/>
    </location>
    <ligand>
        <name>Zn(2+)</name>
        <dbReference type="ChEBI" id="CHEBI:29105"/>
        <label>2</label>
    </ligand>
</feature>
<feature type="binding site" evidence="3">
    <location>
        <position position="826"/>
    </location>
    <ligand>
        <name>Zn(2+)</name>
        <dbReference type="ChEBI" id="CHEBI:29105"/>
        <label>2</label>
    </ligand>
</feature>
<feature type="binding site" evidence="3">
    <location>
        <position position="831"/>
    </location>
    <ligand>
        <name>Zn(2+)</name>
        <dbReference type="ChEBI" id="CHEBI:29105"/>
        <label>1</label>
    </ligand>
</feature>
<feature type="binding site" evidence="3">
    <location>
        <position position="834"/>
    </location>
    <ligand>
        <name>Zn(2+)</name>
        <dbReference type="ChEBI" id="CHEBI:29105"/>
        <label>1</label>
    </ligand>
</feature>
<feature type="binding site" evidence="3">
    <location>
        <position position="851"/>
    </location>
    <ligand>
        <name>Zn(2+)</name>
        <dbReference type="ChEBI" id="CHEBI:29105"/>
        <label>2</label>
    </ligand>
</feature>
<feature type="binding site" evidence="3">
    <location>
        <position position="854"/>
    </location>
    <ligand>
        <name>Zn(2+)</name>
        <dbReference type="ChEBI" id="CHEBI:29105"/>
        <label>2</label>
    </ligand>
</feature>
<feature type="splice variant" id="VSP_061764" description="In isoform e and isoform f." evidence="7">
    <location>
        <begin position="1"/>
        <end position="181"/>
    </location>
</feature>
<feature type="splice variant" id="VSP_061765" description="In isoform c and isoform d." evidence="7">
    <original>KYDMNHRKNSDDTPPASRTVKEMMAEFQNKLDDGDNRFRKQPPPPPSPRRAPPPPPHRKPASLSPPPDDENTIRPPSSSESSENIPEEPQELITPNTTRRSLGPKPTVAPKPLFLNGL</original>
    <variation>NFE</variation>
    <location>
        <begin position="2"/>
        <end position="119"/>
    </location>
</feature>
<feature type="splice variant" id="VSP_061766" description="In isoform a, isoform c and isoform f." evidence="7">
    <location>
        <begin position="929"/>
        <end position="930"/>
    </location>
</feature>
<proteinExistence type="inferred from homology"/>
<protein>
    <recommendedName>
        <fullName evidence="7">FYVE, RhoGEF and PH domain-containing protein tag-77</fullName>
    </recommendedName>
</protein>
<comment type="function">
    <text evidence="1 6">Activates cdc-42, a member of the Ras-like family of Rho- and Rac proteins, by exchanging bound GDP for free GTP (By similarity). May play a role in regulating the actin cytoskeleton and cell shape (By similarity). Required for normal lifespan (PubMed:36173858).</text>
</comment>
<comment type="subcellular location">
    <subcellularLocation>
        <location evidence="1">Cytoplasm</location>
        <location evidence="1">Cytoskeleton</location>
    </subcellularLocation>
</comment>
<comment type="alternative products">
    <event type="alternative splicing"/>
    <isoform>
        <id>X5LX76-1</id>
        <name evidence="10">b</name>
        <sequence type="displayed"/>
    </isoform>
    <isoform>
        <id>X5LX76-2</id>
        <name evidence="9">a</name>
        <sequence type="described" ref="VSP_061766"/>
    </isoform>
    <isoform>
        <id>X5LX76-3</id>
        <name evidence="11">c</name>
        <sequence type="described" ref="VSP_061765 VSP_061766"/>
    </isoform>
    <isoform>
        <id>X5LX76-4</id>
        <name evidence="12">d</name>
        <sequence type="described" ref="VSP_061765"/>
    </isoform>
    <isoform>
        <id>X5LX76-5</id>
        <name evidence="13">e</name>
        <sequence type="described" ref="VSP_061764"/>
    </isoform>
    <isoform>
        <id>X5LX76-6</id>
        <name evidence="14">f</name>
        <sequence type="described" ref="VSP_061764 VSP_061766"/>
    </isoform>
</comment>
<comment type="disruption phenotype">
    <text evidence="6">RNAi-mediated knockdown reduces lifespan.</text>
</comment>
<reference evidence="8" key="1">
    <citation type="journal article" date="1998" name="Science">
        <title>Genome sequence of the nematode C. elegans: a platform for investigating biology.</title>
        <authorList>
            <consortium name="The C. elegans sequencing consortium"/>
        </authorList>
    </citation>
    <scope>NUCLEOTIDE SEQUENCE [LARGE SCALE GENOMIC DNA]</scope>
    <source>
        <strain evidence="8">Bristol N2</strain>
    </source>
</reference>
<reference evidence="7" key="2">
    <citation type="journal article" date="2022" name="Science">
        <title>Sex- and age-dependent genetics of longevity in a heterogeneous mouse population.</title>
        <authorList>
            <person name="Bou Sleiman M."/>
            <person name="Roy S."/>
            <person name="Gao A.W."/>
            <person name="Sadler M.C."/>
            <person name="von Alvensleben G.V.G."/>
            <person name="Li H."/>
            <person name="Sen S."/>
            <person name="Harrison D.E."/>
            <person name="Nelson J.F."/>
            <person name="Strong R."/>
            <person name="Miller R.A."/>
            <person name="Kutalik Z."/>
            <person name="Williams R.W."/>
            <person name="Auwerx J."/>
        </authorList>
    </citation>
    <scope>FUNCTION</scope>
    <scope>DISRUPTION PHENOTYPE</scope>
</reference>
<organism evidence="8">
    <name type="scientific">Caenorhabditis elegans</name>
    <dbReference type="NCBI Taxonomy" id="6239"/>
    <lineage>
        <taxon>Eukaryota</taxon>
        <taxon>Metazoa</taxon>
        <taxon>Ecdysozoa</taxon>
        <taxon>Nematoda</taxon>
        <taxon>Chromadorea</taxon>
        <taxon>Rhabditida</taxon>
        <taxon>Rhabditina</taxon>
        <taxon>Rhabditomorpha</taxon>
        <taxon>Rhabditoidea</taxon>
        <taxon>Rhabditidae</taxon>
        <taxon>Peloderinae</taxon>
        <taxon>Caenorhabditis</taxon>
    </lineage>
</organism>
<accession>X5LX76</accession>
<accession>Q18284</accession>
<accession>X5LPV6</accession>
<accession>X5LV63</accession>
<accession>X5M5R1</accession>
<accession>X5M8V6</accession>
<dbReference type="EMBL" id="BX284604">
    <property type="protein sequence ID" value="CCD64014.2"/>
    <property type="molecule type" value="Genomic_DNA"/>
</dbReference>
<dbReference type="EMBL" id="BX284604">
    <property type="protein sequence ID" value="CDO41097.2"/>
    <property type="molecule type" value="Genomic_DNA"/>
</dbReference>
<dbReference type="EMBL" id="BX284604">
    <property type="protein sequence ID" value="CDO41098.1"/>
    <property type="molecule type" value="Genomic_DNA"/>
</dbReference>
<dbReference type="EMBL" id="BX284604">
    <property type="protein sequence ID" value="CDO41099.1"/>
    <property type="molecule type" value="Genomic_DNA"/>
</dbReference>
<dbReference type="EMBL" id="BX284604">
    <property type="protein sequence ID" value="CDO41100.1"/>
    <property type="molecule type" value="Genomic_DNA"/>
</dbReference>
<dbReference type="EMBL" id="BX284604">
    <property type="protein sequence ID" value="CDO41101.1"/>
    <property type="molecule type" value="Genomic_DNA"/>
</dbReference>
<dbReference type="PIR" id="T15683">
    <property type="entry name" value="T15683"/>
</dbReference>
<dbReference type="RefSeq" id="NP_001294044.2">
    <molecule id="X5LX76-1"/>
    <property type="nucleotide sequence ID" value="NM_001307115.4"/>
</dbReference>
<dbReference type="RefSeq" id="NP_001294045.1">
    <molecule id="X5LX76-3"/>
    <property type="nucleotide sequence ID" value="NM_001307116.3"/>
</dbReference>
<dbReference type="RefSeq" id="NP_001294046.1">
    <molecule id="X5LX76-4"/>
    <property type="nucleotide sequence ID" value="NM_001307117.3"/>
</dbReference>
<dbReference type="RefSeq" id="NP_001294047.1">
    <property type="nucleotide sequence ID" value="NM_001307118.1"/>
</dbReference>
<dbReference type="RefSeq" id="NP_001294048.1">
    <property type="nucleotide sequence ID" value="NM_001307119.1"/>
</dbReference>
<dbReference type="RefSeq" id="NP_001368457.1">
    <molecule id="X5LX76-5"/>
    <property type="nucleotide sequence ID" value="NM_001380370.1"/>
</dbReference>
<dbReference type="RefSeq" id="NP_001368458.1">
    <molecule id="X5LX76-6"/>
    <property type="nucleotide sequence ID" value="NM_001380369.1"/>
</dbReference>
<dbReference type="RefSeq" id="NP_501455.2">
    <molecule id="X5LX76-2"/>
    <property type="nucleotide sequence ID" value="NM_069054.6"/>
</dbReference>
<dbReference type="SMR" id="X5LX76"/>
<dbReference type="FunCoup" id="X5LX76">
    <property type="interactions" value="283"/>
</dbReference>
<dbReference type="STRING" id="6239.C28C12.10b.1"/>
<dbReference type="PaxDb" id="6239-C28C12.10"/>
<dbReference type="EnsemblMetazoa" id="C28C12.10a.1">
    <molecule id="X5LX76-2"/>
    <property type="protein sequence ID" value="C28C12.10a.1"/>
    <property type="gene ID" value="WBGene00006450"/>
</dbReference>
<dbReference type="EnsemblMetazoa" id="C28C12.10b.1">
    <molecule id="X5LX76-1"/>
    <property type="protein sequence ID" value="C28C12.10b.1"/>
    <property type="gene ID" value="WBGene00006450"/>
</dbReference>
<dbReference type="EnsemblMetazoa" id="C28C12.10c.1">
    <molecule id="X5LX76-3"/>
    <property type="protein sequence ID" value="C28C12.10c.1"/>
    <property type="gene ID" value="WBGene00006450"/>
</dbReference>
<dbReference type="EnsemblMetazoa" id="C28C12.10d.1">
    <molecule id="X5LX76-4"/>
    <property type="protein sequence ID" value="C28C12.10d.1"/>
    <property type="gene ID" value="WBGene00006450"/>
</dbReference>
<dbReference type="EnsemblMetazoa" id="C28C12.10e.1">
    <molecule id="X5LX76-5"/>
    <property type="protein sequence ID" value="C28C12.10e.1"/>
    <property type="gene ID" value="WBGene00006450"/>
</dbReference>
<dbReference type="EnsemblMetazoa" id="C28C12.10f.1">
    <molecule id="X5LX76-6"/>
    <property type="protein sequence ID" value="C28C12.10f.1"/>
    <property type="gene ID" value="WBGene00006450"/>
</dbReference>
<dbReference type="GeneID" id="177656"/>
<dbReference type="KEGG" id="cel:CELE_C28C12.10"/>
<dbReference type="UCSC" id="C28C12.10">
    <property type="organism name" value="c. elegans"/>
</dbReference>
<dbReference type="AGR" id="WB:WBGene00006450"/>
<dbReference type="CTD" id="177656"/>
<dbReference type="WormBase" id="C28C12.10a">
    <molecule id="X5LX76-2"/>
    <property type="protein sequence ID" value="CE53883"/>
    <property type="gene ID" value="WBGene00006450"/>
    <property type="gene designation" value="tag-77"/>
</dbReference>
<dbReference type="WormBase" id="C28C12.10b">
    <molecule id="X5LX76-1"/>
    <property type="protein sequence ID" value="CE54001"/>
    <property type="gene ID" value="WBGene00006450"/>
    <property type="gene designation" value="tag-77"/>
</dbReference>
<dbReference type="WormBase" id="C28C12.10c">
    <molecule id="X5LX76-3"/>
    <property type="protein sequence ID" value="CE49623"/>
    <property type="gene ID" value="WBGene00006450"/>
    <property type="gene designation" value="tag-77"/>
</dbReference>
<dbReference type="WormBase" id="C28C12.10d">
    <molecule id="X5LX76-4"/>
    <property type="protein sequence ID" value="CE49650"/>
    <property type="gene ID" value="WBGene00006450"/>
    <property type="gene designation" value="tag-77"/>
</dbReference>
<dbReference type="WormBase" id="C28C12.10e">
    <molecule id="X5LX76-5"/>
    <property type="protein sequence ID" value="CE49675"/>
    <property type="gene ID" value="WBGene00006450"/>
    <property type="gene designation" value="tag-77"/>
</dbReference>
<dbReference type="WormBase" id="C28C12.10f">
    <molecule id="X5LX76-6"/>
    <property type="protein sequence ID" value="CE49718"/>
    <property type="gene ID" value="WBGene00006450"/>
    <property type="gene designation" value="tag-77"/>
</dbReference>
<dbReference type="eggNOG" id="KOG1729">
    <property type="taxonomic scope" value="Eukaryota"/>
</dbReference>
<dbReference type="HOGENOM" id="CLU_011755_0_0_1"/>
<dbReference type="InParanoid" id="X5LX76"/>
<dbReference type="OrthoDB" id="245697at2759"/>
<dbReference type="Reactome" id="R-CEL-9013149">
    <property type="pathway name" value="RAC1 GTPase cycle"/>
</dbReference>
<dbReference type="PRO" id="PR:X5LX76"/>
<dbReference type="Proteomes" id="UP000001940">
    <property type="component" value="Chromosome IV"/>
</dbReference>
<dbReference type="Bgee" id="WBGene00006450">
    <property type="expression patterns" value="Expressed in germ line (C elegans) and 4 other cell types or tissues"/>
</dbReference>
<dbReference type="ExpressionAtlas" id="X5LX76">
    <property type="expression patterns" value="baseline and differential"/>
</dbReference>
<dbReference type="GO" id="GO:0005737">
    <property type="term" value="C:cytoplasm"/>
    <property type="evidence" value="ECO:0000318"/>
    <property type="project" value="GO_Central"/>
</dbReference>
<dbReference type="GO" id="GO:0005856">
    <property type="term" value="C:cytoskeleton"/>
    <property type="evidence" value="ECO:0007669"/>
    <property type="project" value="UniProtKB-SubCell"/>
</dbReference>
<dbReference type="GO" id="GO:0005085">
    <property type="term" value="F:guanyl-nucleotide exchange factor activity"/>
    <property type="evidence" value="ECO:0000318"/>
    <property type="project" value="GO_Central"/>
</dbReference>
<dbReference type="GO" id="GO:0008270">
    <property type="term" value="F:zinc ion binding"/>
    <property type="evidence" value="ECO:0007669"/>
    <property type="project" value="UniProtKB-KW"/>
</dbReference>
<dbReference type="GO" id="GO:0007010">
    <property type="term" value="P:cytoskeleton organization"/>
    <property type="evidence" value="ECO:0000318"/>
    <property type="project" value="GO_Central"/>
</dbReference>
<dbReference type="GO" id="GO:0046847">
    <property type="term" value="P:filopodium assembly"/>
    <property type="evidence" value="ECO:0000318"/>
    <property type="project" value="GO_Central"/>
</dbReference>
<dbReference type="CDD" id="cd13389">
    <property type="entry name" value="PH1_FGD5_FGD6"/>
    <property type="match status" value="1"/>
</dbReference>
<dbReference type="CDD" id="cd00160">
    <property type="entry name" value="RhoGEF"/>
    <property type="match status" value="1"/>
</dbReference>
<dbReference type="FunFam" id="3.30.40.10:FF:000913">
    <property type="entry name" value="Non-specific serine/threonine protein kinase"/>
    <property type="match status" value="1"/>
</dbReference>
<dbReference type="Gene3D" id="1.20.900.10">
    <property type="entry name" value="Dbl homology (DH) domain"/>
    <property type="match status" value="1"/>
</dbReference>
<dbReference type="Gene3D" id="2.30.29.30">
    <property type="entry name" value="Pleckstrin-homology domain (PH domain)/Phosphotyrosine-binding domain (PTB)"/>
    <property type="match status" value="1"/>
</dbReference>
<dbReference type="Gene3D" id="3.30.40.10">
    <property type="entry name" value="Zinc/RING finger domain, C3HC4 (zinc finger)"/>
    <property type="match status" value="1"/>
</dbReference>
<dbReference type="InterPro" id="IPR035899">
    <property type="entry name" value="DBL_dom_sf"/>
</dbReference>
<dbReference type="InterPro" id="IPR000219">
    <property type="entry name" value="DH_dom"/>
</dbReference>
<dbReference type="InterPro" id="IPR051092">
    <property type="entry name" value="FYVE_RhoGEF_PH"/>
</dbReference>
<dbReference type="InterPro" id="IPR011993">
    <property type="entry name" value="PH-like_dom_sf"/>
</dbReference>
<dbReference type="InterPro" id="IPR001849">
    <property type="entry name" value="PH_domain"/>
</dbReference>
<dbReference type="InterPro" id="IPR000306">
    <property type="entry name" value="Znf_FYVE"/>
</dbReference>
<dbReference type="InterPro" id="IPR017455">
    <property type="entry name" value="Znf_FYVE-rel"/>
</dbReference>
<dbReference type="InterPro" id="IPR011011">
    <property type="entry name" value="Znf_FYVE_PHD"/>
</dbReference>
<dbReference type="InterPro" id="IPR013083">
    <property type="entry name" value="Znf_RING/FYVE/PHD"/>
</dbReference>
<dbReference type="PANTHER" id="PTHR12673">
    <property type="entry name" value="FACIOGENITAL DYSPLASIA PROTEIN"/>
    <property type="match status" value="1"/>
</dbReference>
<dbReference type="PANTHER" id="PTHR12673:SF271">
    <property type="entry name" value="FYVE, RHOGEF AND PH DOMAIN-CONTAINING PROTEIN TAG-77"/>
    <property type="match status" value="1"/>
</dbReference>
<dbReference type="Pfam" id="PF01363">
    <property type="entry name" value="FYVE"/>
    <property type="match status" value="1"/>
</dbReference>
<dbReference type="Pfam" id="PF00621">
    <property type="entry name" value="RhoGEF"/>
    <property type="match status" value="1"/>
</dbReference>
<dbReference type="SMART" id="SM00064">
    <property type="entry name" value="FYVE"/>
    <property type="match status" value="1"/>
</dbReference>
<dbReference type="SMART" id="SM00233">
    <property type="entry name" value="PH"/>
    <property type="match status" value="2"/>
</dbReference>
<dbReference type="SMART" id="SM00325">
    <property type="entry name" value="RhoGEF"/>
    <property type="match status" value="1"/>
</dbReference>
<dbReference type="SUPFAM" id="SSF48065">
    <property type="entry name" value="DBL homology domain (DH-domain)"/>
    <property type="match status" value="1"/>
</dbReference>
<dbReference type="SUPFAM" id="SSF57903">
    <property type="entry name" value="FYVE/PHD zinc finger"/>
    <property type="match status" value="1"/>
</dbReference>
<dbReference type="SUPFAM" id="SSF50729">
    <property type="entry name" value="PH domain-like"/>
    <property type="match status" value="1"/>
</dbReference>
<dbReference type="PROSITE" id="PS50010">
    <property type="entry name" value="DH_2"/>
    <property type="match status" value="1"/>
</dbReference>
<dbReference type="PROSITE" id="PS50003">
    <property type="entry name" value="PH_DOMAIN"/>
    <property type="match status" value="1"/>
</dbReference>
<dbReference type="PROSITE" id="PS50178">
    <property type="entry name" value="ZF_FYVE"/>
    <property type="match status" value="1"/>
</dbReference>